<sequence length="19" mass="1945">FIGAILPAIAGLVHGLINR</sequence>
<dbReference type="GO" id="GO:0005576">
    <property type="term" value="C:extracellular region"/>
    <property type="evidence" value="ECO:0000314"/>
    <property type="project" value="UniProtKB"/>
</dbReference>
<dbReference type="GO" id="GO:0006952">
    <property type="term" value="P:defense response"/>
    <property type="evidence" value="ECO:0007669"/>
    <property type="project" value="UniProtKB-KW"/>
</dbReference>
<dbReference type="GO" id="GO:0044179">
    <property type="term" value="P:hemolysis in another organism"/>
    <property type="evidence" value="ECO:0000314"/>
    <property type="project" value="UniProtKB"/>
</dbReference>
<name>HYB1_BOALU</name>
<organism>
    <name type="scientific">Boana lundii</name>
    <name type="common">Brazilian tree frog</name>
    <name type="synonym">Hypsiboas lundii</name>
    <dbReference type="NCBI Taxonomy" id="2517092"/>
    <lineage>
        <taxon>Eukaryota</taxon>
        <taxon>Metazoa</taxon>
        <taxon>Chordata</taxon>
        <taxon>Craniata</taxon>
        <taxon>Vertebrata</taxon>
        <taxon>Euteleostomi</taxon>
        <taxon>Amphibia</taxon>
        <taxon>Batrachia</taxon>
        <taxon>Anura</taxon>
        <taxon>Neobatrachia</taxon>
        <taxon>Hyloidea</taxon>
        <taxon>Hylidae</taxon>
        <taxon>Hylinae</taxon>
        <taxon>Cophomantini</taxon>
        <taxon>Boana</taxon>
    </lineage>
</organism>
<accession>P84002</accession>
<comment type="function">
    <text evidence="1 2">Has hemolytic activity against human erythrocytes. May have antimicrobial activity.</text>
</comment>
<comment type="subcellular location">
    <subcellularLocation>
        <location evidence="1">Secreted</location>
    </subcellularLocation>
</comment>
<comment type="tissue specificity">
    <text evidence="1">Expressed by the skin glands.</text>
</comment>
<comment type="mass spectrometry" mass="1944.13" method="Electrospray" evidence="1"/>
<protein>
    <recommendedName>
        <fullName>Hylin-b1</fullName>
        <shortName>Hy-b1</shortName>
    </recommendedName>
</protein>
<proteinExistence type="evidence at protein level"/>
<feature type="peptide" id="PRO_0000043804" description="Hylin-b1">
    <location>
        <begin position="1"/>
        <end position="19"/>
    </location>
</feature>
<feature type="modified residue" description="Arginine amide" evidence="1">
    <location>
        <position position="19"/>
    </location>
</feature>
<keyword id="KW-0027">Amidation</keyword>
<keyword id="KW-0878">Amphibian defense peptide</keyword>
<keyword id="KW-0204">Cytolysis</keyword>
<keyword id="KW-0903">Direct protein sequencing</keyword>
<keyword id="KW-0354">Hemolysis</keyword>
<keyword id="KW-0964">Secreted</keyword>
<reference evidence="3" key="1">
    <citation type="journal article" date="2005" name="Protein Pept. Lett.">
        <title>Hylins: bombinins H structurally related peptides from the skin secretion of the Brazilian tree-frog Hyla biobeba.</title>
        <authorList>
            <person name="Castro M.S."/>
            <person name="Matsushita R.H."/>
            <person name="Sebben A."/>
            <person name="Sousa M.V."/>
            <person name="Fontes W."/>
        </authorList>
    </citation>
    <scope>PROTEIN SEQUENCE</scope>
    <scope>FUNCTION</scope>
    <scope>SUBCELLULAR LOCATION</scope>
    <scope>TISSUE SPECIFICITY</scope>
    <scope>MASS SPECTROMETRY</scope>
    <scope>AMIDATION AT ARG-19</scope>
    <source>
        <tissue evidence="1">Skin secretion</tissue>
    </source>
</reference>
<evidence type="ECO:0000269" key="1">
    <source>
    </source>
</evidence>
<evidence type="ECO:0000303" key="2">
    <source>
    </source>
</evidence>
<evidence type="ECO:0000305" key="3"/>